<comment type="subcellular location">
    <subcellularLocation>
        <location evidence="1">Cell membrane</location>
        <topology evidence="1">Multi-pass membrane protein</topology>
    </subcellularLocation>
</comment>
<comment type="similarity">
    <text evidence="1">Belongs to the UPF0114 family.</text>
</comment>
<protein>
    <recommendedName>
        <fullName evidence="1">UPF0114 protein Pput_0713</fullName>
    </recommendedName>
</protein>
<dbReference type="EMBL" id="CP000712">
    <property type="protein sequence ID" value="ABQ76877.1"/>
    <property type="molecule type" value="Genomic_DNA"/>
</dbReference>
<dbReference type="KEGG" id="ppf:Pput_0713"/>
<dbReference type="eggNOG" id="COG2862">
    <property type="taxonomic scope" value="Bacteria"/>
</dbReference>
<dbReference type="HOGENOM" id="CLU_097887_1_1_6"/>
<dbReference type="GO" id="GO:0005886">
    <property type="term" value="C:plasma membrane"/>
    <property type="evidence" value="ECO:0007669"/>
    <property type="project" value="UniProtKB-SubCell"/>
</dbReference>
<dbReference type="HAMAP" id="MF_00143">
    <property type="entry name" value="UPF0114"/>
    <property type="match status" value="1"/>
</dbReference>
<dbReference type="InterPro" id="IPR005134">
    <property type="entry name" value="UPF0114"/>
</dbReference>
<dbReference type="InterPro" id="IPR020761">
    <property type="entry name" value="UPF0114_bac"/>
</dbReference>
<dbReference type="NCBIfam" id="TIGR00645">
    <property type="entry name" value="HI0507"/>
    <property type="match status" value="1"/>
</dbReference>
<dbReference type="PANTHER" id="PTHR38596">
    <property type="entry name" value="UPF0114 PROTEIN YQHA"/>
    <property type="match status" value="1"/>
</dbReference>
<dbReference type="PANTHER" id="PTHR38596:SF1">
    <property type="entry name" value="UPF0114 PROTEIN YQHA"/>
    <property type="match status" value="1"/>
</dbReference>
<dbReference type="Pfam" id="PF03350">
    <property type="entry name" value="UPF0114"/>
    <property type="match status" value="1"/>
</dbReference>
<sequence length="162" mass="18258">MERILENAMYASRWLLAPIYFGLSLGLLALALKFFQEVVHVLPNVFALSEADLILVILSLIDMSLVGGLLVMVMISGYENFVSQLDIDESKEKLNWLGKMDSSSLKMKVAASIVAISSIHLLRVFMDAQNISTDYLMWYVIIHMTFVVSAFCMGYLDKLTKH</sequence>
<keyword id="KW-1003">Cell membrane</keyword>
<keyword id="KW-0472">Membrane</keyword>
<keyword id="KW-0812">Transmembrane</keyword>
<keyword id="KW-1133">Transmembrane helix</keyword>
<organism>
    <name type="scientific">Pseudomonas putida (strain ATCC 700007 / DSM 6899 / JCM 31910 / BCRC 17059 / LMG 24140 / F1)</name>
    <dbReference type="NCBI Taxonomy" id="351746"/>
    <lineage>
        <taxon>Bacteria</taxon>
        <taxon>Pseudomonadati</taxon>
        <taxon>Pseudomonadota</taxon>
        <taxon>Gammaproteobacteria</taxon>
        <taxon>Pseudomonadales</taxon>
        <taxon>Pseudomonadaceae</taxon>
        <taxon>Pseudomonas</taxon>
    </lineage>
</organism>
<feature type="chain" id="PRO_1000057940" description="UPF0114 protein Pput_0713">
    <location>
        <begin position="1"/>
        <end position="162"/>
    </location>
</feature>
<feature type="transmembrane region" description="Helical" evidence="1">
    <location>
        <begin position="15"/>
        <end position="35"/>
    </location>
</feature>
<feature type="transmembrane region" description="Helical" evidence="1">
    <location>
        <begin position="53"/>
        <end position="73"/>
    </location>
</feature>
<feature type="transmembrane region" description="Helical" evidence="1">
    <location>
        <begin position="109"/>
        <end position="126"/>
    </location>
</feature>
<feature type="transmembrane region" description="Helical" evidence="1">
    <location>
        <begin position="136"/>
        <end position="156"/>
    </location>
</feature>
<proteinExistence type="inferred from homology"/>
<reference key="1">
    <citation type="submission" date="2007-05" db="EMBL/GenBank/DDBJ databases">
        <title>Complete sequence of Pseudomonas putida F1.</title>
        <authorList>
            <consortium name="US DOE Joint Genome Institute"/>
            <person name="Copeland A."/>
            <person name="Lucas S."/>
            <person name="Lapidus A."/>
            <person name="Barry K."/>
            <person name="Detter J.C."/>
            <person name="Glavina del Rio T."/>
            <person name="Hammon N."/>
            <person name="Israni S."/>
            <person name="Dalin E."/>
            <person name="Tice H."/>
            <person name="Pitluck S."/>
            <person name="Chain P."/>
            <person name="Malfatti S."/>
            <person name="Shin M."/>
            <person name="Vergez L."/>
            <person name="Schmutz J."/>
            <person name="Larimer F."/>
            <person name="Land M."/>
            <person name="Hauser L."/>
            <person name="Kyrpides N."/>
            <person name="Lykidis A."/>
            <person name="Parales R."/>
            <person name="Richardson P."/>
        </authorList>
    </citation>
    <scope>NUCLEOTIDE SEQUENCE [LARGE SCALE GENOMIC DNA]</scope>
    <source>
        <strain>ATCC 700007 / DSM 6899 / JCM 31910 / BCRC 17059 / LMG 24140 / F1</strain>
    </source>
</reference>
<accession>A5VYB7</accession>
<gene>
    <name type="ordered locus">Pput_0713</name>
</gene>
<evidence type="ECO:0000255" key="1">
    <source>
        <dbReference type="HAMAP-Rule" id="MF_00143"/>
    </source>
</evidence>
<name>Y713_PSEP1</name>